<protein>
    <recommendedName>
        <fullName evidence="1">Oligoribonuclease</fullName>
        <ecNumber evidence="1">3.1.15.-</ecNumber>
    </recommendedName>
</protein>
<reference key="1">
    <citation type="journal article" date="2006" name="Genome Biol.">
        <title>Genomic analysis reveals that Pseudomonas aeruginosa virulence is combinatorial.</title>
        <authorList>
            <person name="Lee D.G."/>
            <person name="Urbach J.M."/>
            <person name="Wu G."/>
            <person name="Liberati N.T."/>
            <person name="Feinbaum R.L."/>
            <person name="Miyata S."/>
            <person name="Diggins L.T."/>
            <person name="He J."/>
            <person name="Saucier M."/>
            <person name="Deziel E."/>
            <person name="Friedman L."/>
            <person name="Li L."/>
            <person name="Grills G."/>
            <person name="Montgomery K."/>
            <person name="Kucherlapati R."/>
            <person name="Rahme L.G."/>
            <person name="Ausubel F.M."/>
        </authorList>
    </citation>
    <scope>NUCLEOTIDE SEQUENCE [LARGE SCALE GENOMIC DNA]</scope>
    <source>
        <strain>UCBPP-PA14</strain>
    </source>
</reference>
<evidence type="ECO:0000255" key="1">
    <source>
        <dbReference type="HAMAP-Rule" id="MF_00045"/>
    </source>
</evidence>
<dbReference type="EC" id="3.1.15.-" evidence="1"/>
<dbReference type="EMBL" id="CP000438">
    <property type="protein sequence ID" value="ABJ14336.1"/>
    <property type="molecule type" value="Genomic_DNA"/>
</dbReference>
<dbReference type="RefSeq" id="WP_003095671.1">
    <property type="nucleotide sequence ID" value="NZ_CP034244.1"/>
</dbReference>
<dbReference type="SMR" id="Q02F67"/>
<dbReference type="KEGG" id="pau:PA14_65410"/>
<dbReference type="PseudoCAP" id="PA14_65410"/>
<dbReference type="HOGENOM" id="CLU_064761_2_0_6"/>
<dbReference type="BioCyc" id="PAER208963:G1G74-5526-MONOMER"/>
<dbReference type="BRENDA" id="3.1.13.3">
    <property type="organism ID" value="5087"/>
</dbReference>
<dbReference type="Proteomes" id="UP000000653">
    <property type="component" value="Chromosome"/>
</dbReference>
<dbReference type="GO" id="GO:0005737">
    <property type="term" value="C:cytoplasm"/>
    <property type="evidence" value="ECO:0007669"/>
    <property type="project" value="UniProtKB-SubCell"/>
</dbReference>
<dbReference type="GO" id="GO:0000175">
    <property type="term" value="F:3'-5'-RNA exonuclease activity"/>
    <property type="evidence" value="ECO:0007669"/>
    <property type="project" value="InterPro"/>
</dbReference>
<dbReference type="GO" id="GO:0003676">
    <property type="term" value="F:nucleic acid binding"/>
    <property type="evidence" value="ECO:0007669"/>
    <property type="project" value="InterPro"/>
</dbReference>
<dbReference type="GO" id="GO:0006259">
    <property type="term" value="P:DNA metabolic process"/>
    <property type="evidence" value="ECO:0007669"/>
    <property type="project" value="UniProtKB-ARBA"/>
</dbReference>
<dbReference type="CDD" id="cd06135">
    <property type="entry name" value="Orn"/>
    <property type="match status" value="1"/>
</dbReference>
<dbReference type="FunFam" id="3.30.420.10:FF:000003">
    <property type="entry name" value="Oligoribonuclease"/>
    <property type="match status" value="1"/>
</dbReference>
<dbReference type="Gene3D" id="3.30.420.10">
    <property type="entry name" value="Ribonuclease H-like superfamily/Ribonuclease H"/>
    <property type="match status" value="1"/>
</dbReference>
<dbReference type="HAMAP" id="MF_00045">
    <property type="entry name" value="Oligoribonuclease"/>
    <property type="match status" value="1"/>
</dbReference>
<dbReference type="InterPro" id="IPR013520">
    <property type="entry name" value="Exonuclease_RNaseT/DNA_pol3"/>
</dbReference>
<dbReference type="InterPro" id="IPR022894">
    <property type="entry name" value="Oligoribonuclease"/>
</dbReference>
<dbReference type="InterPro" id="IPR012337">
    <property type="entry name" value="RNaseH-like_sf"/>
</dbReference>
<dbReference type="InterPro" id="IPR036397">
    <property type="entry name" value="RNaseH_sf"/>
</dbReference>
<dbReference type="NCBIfam" id="NF003765">
    <property type="entry name" value="PRK05359.1"/>
    <property type="match status" value="1"/>
</dbReference>
<dbReference type="PANTHER" id="PTHR11046">
    <property type="entry name" value="OLIGORIBONUCLEASE, MITOCHONDRIAL"/>
    <property type="match status" value="1"/>
</dbReference>
<dbReference type="PANTHER" id="PTHR11046:SF0">
    <property type="entry name" value="OLIGORIBONUCLEASE, MITOCHONDRIAL"/>
    <property type="match status" value="1"/>
</dbReference>
<dbReference type="Pfam" id="PF00929">
    <property type="entry name" value="RNase_T"/>
    <property type="match status" value="1"/>
</dbReference>
<dbReference type="SMART" id="SM00479">
    <property type="entry name" value="EXOIII"/>
    <property type="match status" value="1"/>
</dbReference>
<dbReference type="SUPFAM" id="SSF53098">
    <property type="entry name" value="Ribonuclease H-like"/>
    <property type="match status" value="1"/>
</dbReference>
<sequence>MQNPQNLIWIDLEMTGLDPDRDVIIEMATIVTDSDLNTLAEGPVIAIHQPEEILAGMDEWNTRQHGQSGLTQRVRESTVSMAEAEAQTLAFLEQWVPKRSSPICGNSICQDRRFLYRHMPRLEGYFHYRNLDVSTLKELAARWAPQVRESFKKGNTHLALDDIRESIAELRHYRDHFIKL</sequence>
<organism>
    <name type="scientific">Pseudomonas aeruginosa (strain UCBPP-PA14)</name>
    <dbReference type="NCBI Taxonomy" id="208963"/>
    <lineage>
        <taxon>Bacteria</taxon>
        <taxon>Pseudomonadati</taxon>
        <taxon>Pseudomonadota</taxon>
        <taxon>Gammaproteobacteria</taxon>
        <taxon>Pseudomonadales</taxon>
        <taxon>Pseudomonadaceae</taxon>
        <taxon>Pseudomonas</taxon>
    </lineage>
</organism>
<accession>Q02F67</accession>
<proteinExistence type="inferred from homology"/>
<gene>
    <name evidence="1" type="primary">orn</name>
    <name type="ordered locus">PA14_65410</name>
</gene>
<comment type="function">
    <text evidence="1">3'-to-5' exoribonuclease specific for small oligoribonucleotides.</text>
</comment>
<comment type="subcellular location">
    <subcellularLocation>
        <location evidence="1">Cytoplasm</location>
    </subcellularLocation>
</comment>
<comment type="similarity">
    <text evidence="1">Belongs to the oligoribonuclease family.</text>
</comment>
<keyword id="KW-0963">Cytoplasm</keyword>
<keyword id="KW-0269">Exonuclease</keyword>
<keyword id="KW-0378">Hydrolase</keyword>
<keyword id="KW-0540">Nuclease</keyword>
<name>ORN_PSEAB</name>
<feature type="chain" id="PRO_1000004272" description="Oligoribonuclease">
    <location>
        <begin position="1"/>
        <end position="180"/>
    </location>
</feature>
<feature type="domain" description="Exonuclease" evidence="1">
    <location>
        <begin position="7"/>
        <end position="170"/>
    </location>
</feature>
<feature type="active site" evidence="1">
    <location>
        <position position="128"/>
    </location>
</feature>